<gene>
    <name type="primary">petJ</name>
</gene>
<proteinExistence type="evidence at protein level"/>
<dbReference type="PIR" id="A00106">
    <property type="entry name" value="CCYC6L"/>
</dbReference>
<dbReference type="PDB" id="2V08">
    <property type="method" value="X-ray"/>
    <property type="resolution" value="2.00 A"/>
    <property type="chains" value="A/B=1-85"/>
</dbReference>
<dbReference type="PDBsum" id="2V08"/>
<dbReference type="SMR" id="P00114"/>
<dbReference type="GO" id="GO:0031979">
    <property type="term" value="C:plasma membrane-derived thylakoid lumen"/>
    <property type="evidence" value="ECO:0007669"/>
    <property type="project" value="UniProtKB-SubCell"/>
</dbReference>
<dbReference type="GO" id="GO:0009055">
    <property type="term" value="F:electron transfer activity"/>
    <property type="evidence" value="ECO:0007669"/>
    <property type="project" value="UniProtKB-UniRule"/>
</dbReference>
<dbReference type="GO" id="GO:0020037">
    <property type="term" value="F:heme binding"/>
    <property type="evidence" value="ECO:0007669"/>
    <property type="project" value="InterPro"/>
</dbReference>
<dbReference type="GO" id="GO:0005506">
    <property type="term" value="F:iron ion binding"/>
    <property type="evidence" value="ECO:0007669"/>
    <property type="project" value="InterPro"/>
</dbReference>
<dbReference type="GO" id="GO:0015979">
    <property type="term" value="P:photosynthesis"/>
    <property type="evidence" value="ECO:0007669"/>
    <property type="project" value="UniProtKB-UniRule"/>
</dbReference>
<dbReference type="FunFam" id="1.10.760.10:FF:000038">
    <property type="entry name" value="Cytochrome c6"/>
    <property type="match status" value="1"/>
</dbReference>
<dbReference type="Gene3D" id="1.10.760.10">
    <property type="entry name" value="Cytochrome c-like domain"/>
    <property type="match status" value="1"/>
</dbReference>
<dbReference type="HAMAP" id="MF_00594">
    <property type="entry name" value="Cytc_PetJ"/>
    <property type="match status" value="1"/>
</dbReference>
<dbReference type="InterPro" id="IPR009056">
    <property type="entry name" value="Cyt_c-like_dom"/>
</dbReference>
<dbReference type="InterPro" id="IPR036909">
    <property type="entry name" value="Cyt_c-like_dom_sf"/>
</dbReference>
<dbReference type="InterPro" id="IPR023655">
    <property type="entry name" value="Cyt_C6"/>
</dbReference>
<dbReference type="InterPro" id="IPR008168">
    <property type="entry name" value="Cyt_C_IC"/>
</dbReference>
<dbReference type="NCBIfam" id="NF045930">
    <property type="entry name" value="Cytc6PetJCyano"/>
    <property type="match status" value="1"/>
</dbReference>
<dbReference type="PANTHER" id="PTHR34688">
    <property type="entry name" value="CYTOCHROME C6, CHLOROPLASTIC"/>
    <property type="match status" value="1"/>
</dbReference>
<dbReference type="PANTHER" id="PTHR34688:SF2">
    <property type="entry name" value="CYTOCHROME C6, CHLOROPLASTIC"/>
    <property type="match status" value="1"/>
</dbReference>
<dbReference type="Pfam" id="PF13442">
    <property type="entry name" value="Cytochrome_CBB3"/>
    <property type="match status" value="1"/>
</dbReference>
<dbReference type="PRINTS" id="PR00605">
    <property type="entry name" value="CYTCHROMECIC"/>
</dbReference>
<dbReference type="SUPFAM" id="SSF46626">
    <property type="entry name" value="Cytochrome c"/>
    <property type="match status" value="1"/>
</dbReference>
<dbReference type="PROSITE" id="PS51007">
    <property type="entry name" value="CYTC"/>
    <property type="match status" value="1"/>
</dbReference>
<evidence type="ECO:0000250" key="1"/>
<evidence type="ECO:0000305" key="2"/>
<comment type="function">
    <text>Functions as an electron carrier between membrane-bound cytochrome b6-f and photosystem I in oxygenic photosynthesis.</text>
</comment>
<comment type="subunit">
    <text evidence="1">Monomer.</text>
</comment>
<comment type="subcellular location">
    <subcellularLocation>
        <location evidence="2">Cellular thylakoid lumen</location>
    </subcellularLocation>
</comment>
<comment type="PTM">
    <text evidence="1">Binds 1 heme c group covalently per subunit.</text>
</comment>
<comment type="similarity">
    <text evidence="2">Belongs to the cytochrome c family. PetJ subfamily.</text>
</comment>
<protein>
    <recommendedName>
        <fullName>Cytochrome c6</fullName>
    </recommendedName>
    <alternativeName>
        <fullName>Cytochrome c-553</fullName>
    </alternativeName>
    <alternativeName>
        <fullName>Cytochrome c553</fullName>
    </alternativeName>
    <alternativeName>
        <fullName>Soluble cytochrome f</fullName>
    </alternativeName>
</protein>
<feature type="chain" id="PRO_0000208688" description="Cytochrome c6">
    <location>
        <begin position="1"/>
        <end position="87"/>
    </location>
</feature>
<feature type="binding site" description="covalent">
    <location>
        <position position="14"/>
    </location>
    <ligand>
        <name>heme c</name>
        <dbReference type="ChEBI" id="CHEBI:61717"/>
    </ligand>
</feature>
<feature type="binding site" description="covalent">
    <location>
        <position position="17"/>
    </location>
    <ligand>
        <name>heme c</name>
        <dbReference type="ChEBI" id="CHEBI:61717"/>
    </ligand>
</feature>
<feature type="binding site" description="axial binding residue">
    <location>
        <position position="18"/>
    </location>
    <ligand>
        <name>heme c</name>
        <dbReference type="ChEBI" id="CHEBI:61717"/>
    </ligand>
    <ligandPart>
        <name>Fe</name>
        <dbReference type="ChEBI" id="CHEBI:18248"/>
    </ligandPart>
</feature>
<feature type="binding site" description="axial binding residue">
    <location>
        <position position="58"/>
    </location>
    <ligand>
        <name>heme c</name>
        <dbReference type="ChEBI" id="CHEBI:61717"/>
    </ligand>
    <ligandPart>
        <name>Fe</name>
        <dbReference type="ChEBI" id="CHEBI:18248"/>
    </ligandPart>
</feature>
<accession>P00114</accession>
<name>CYC6_PARLV</name>
<reference key="1">
    <citation type="submission" date="1979-12" db="PIR data bank">
        <authorList>
            <person name="Borden D."/>
            <person name="Margoliash E."/>
        </authorList>
    </citation>
    <scope>PROTEIN SEQUENCE</scope>
</reference>
<organism>
    <name type="scientific">Parathermosynechococcus lividus</name>
    <name type="common">Thermostichus lividus</name>
    <dbReference type="NCBI Taxonomy" id="33070"/>
    <lineage>
        <taxon>Bacteria</taxon>
        <taxon>Bacillati</taxon>
        <taxon>Cyanobacteriota</taxon>
        <taxon>Cyanophyceae</taxon>
        <taxon>Acaryochloridales</taxon>
        <taxon>Thermosynechococcaceae</taxon>
        <taxon>Parathermosynechococcus</taxon>
    </lineage>
</organism>
<sequence length="87" mass="9129">ADLANGAKVFSGNCAACHMGGGNVVMANKTLKKEALEQFGMNSEDAIIYQVQHGKNAMPAFAGRLTDEQIQDVAAYVLDQAAKGWAG</sequence>
<keyword id="KW-0002">3D-structure</keyword>
<keyword id="KW-0903">Direct protein sequencing</keyword>
<keyword id="KW-0249">Electron transport</keyword>
<keyword id="KW-0349">Heme</keyword>
<keyword id="KW-0408">Iron</keyword>
<keyword id="KW-0479">Metal-binding</keyword>
<keyword id="KW-0602">Photosynthesis</keyword>
<keyword id="KW-0793">Thylakoid</keyword>
<keyword id="KW-0813">Transport</keyword>